<reference key="1">
    <citation type="journal article" date="1998" name="DNA Res.">
        <title>Complete sequence and gene organization of the genome of a hyper-thermophilic archaebacterium, Pyrococcus horikoshii OT3.</title>
        <authorList>
            <person name="Kawarabayasi Y."/>
            <person name="Sawada M."/>
            <person name="Horikawa H."/>
            <person name="Haikawa Y."/>
            <person name="Hino Y."/>
            <person name="Yamamoto S."/>
            <person name="Sekine M."/>
            <person name="Baba S."/>
            <person name="Kosugi H."/>
            <person name="Hosoyama A."/>
            <person name="Nagai Y."/>
            <person name="Sakai M."/>
            <person name="Ogura K."/>
            <person name="Otsuka R."/>
            <person name="Nakazawa H."/>
            <person name="Takamiya M."/>
            <person name="Ohfuku Y."/>
            <person name="Funahashi T."/>
            <person name="Tanaka T."/>
            <person name="Kudoh Y."/>
            <person name="Yamazaki J."/>
            <person name="Kushida N."/>
            <person name="Oguchi A."/>
            <person name="Aoki K."/>
            <person name="Yoshizawa T."/>
            <person name="Nakamura Y."/>
            <person name="Robb F.T."/>
            <person name="Horikoshi K."/>
            <person name="Masuchi Y."/>
            <person name="Shizuya H."/>
            <person name="Kikuchi H."/>
        </authorList>
    </citation>
    <scope>NUCLEOTIDE SEQUENCE [LARGE SCALE GENOMIC DNA]</scope>
    <source>
        <strain>ATCC 700860 / DSM 12428 / JCM 9974 / NBRC 100139 / OT-3</strain>
    </source>
</reference>
<reference key="2">
    <citation type="journal article" date="2005" name="J. Biol. Chem.">
        <title>A novel thermostable membrane protease forming an operon with a stomatin homolog from the hyperthermophilic archaebacterium Pyrococcus horikoshii.</title>
        <authorList>
            <person name="Yokoyama H."/>
            <person name="Matsui I."/>
        </authorList>
    </citation>
    <scope>FUNCTION</scope>
    <scope>SUBUNIT</scope>
    <scope>BIOPHYSICOCHEMICAL PROPERTIES</scope>
    <scope>MUTAGENESIS OF THR-62; SER-97; LYS-138 AND ASP-168</scope>
    <scope>ACTIVITY REGULATION</scope>
    <source>
        <strain>ATCC 700860 / DSM 12428 / JCM 9974 / NBRC 100139 / OT-3</strain>
    </source>
</reference>
<reference key="3">
    <citation type="journal article" date="2006" name="J. Mol. Biol.">
        <title>Molecular structure of a novel membrane protease specific for a stomatin homolog from the hyperthermophilic archaeon Pyrococcus horikoshii.</title>
        <authorList>
            <person name="Yokoyama H."/>
            <person name="Matsui E."/>
            <person name="Akiba T."/>
            <person name="Harata K."/>
            <person name="Matsui I."/>
        </authorList>
    </citation>
    <scope>X-RAY CRYSTALLOGRAPHY (3.00 ANGSTROMS) OF 16-236</scope>
    <scope>SUBUNIT</scope>
    <scope>FUNCTION</scope>
    <source>
        <strain>ATCC 700860 / DSM 12428 / JCM 9974 / NBRC 100139 / OT-3</strain>
    </source>
</reference>
<reference key="4">
    <citation type="journal article" date="2008" name="J. Synchrotron Radiat.">
        <title>Novel dimer structure of a membrane-bound protease with a catalytic Ser-Lys dyad and its linkage to stomatin.</title>
        <authorList>
            <person name="Yokoyama H."/>
            <person name="Hamamatsu S."/>
            <person name="Fujii S."/>
            <person name="Matsui I."/>
        </authorList>
    </citation>
    <scope>X-RAY CRYSTALLOGRAPHY (2.30 ANGSTROMS) OF 16-236 OF MUTANT ALA-138</scope>
    <scope>SUBUNIT</scope>
    <source>
        <strain>ATCC 700860 / DSM 12428 / JCM 9974 / NBRC 100139 / OT-3</strain>
    </source>
</reference>
<reference key="5">
    <citation type="journal article" date="2012" name="Biochemistry">
        <title>Crystal structure of a membrane stomatin-specific protease in complex with a substrate peptide.</title>
        <authorList>
            <person name="Yokoyama H."/>
            <person name="Takizawa N."/>
            <person name="Kobayashi D."/>
            <person name="Matsui I."/>
            <person name="Fujii S."/>
        </authorList>
    </citation>
    <scope>X-RAY CRYSTALLOGRAPHY (2.25 ANGSTROMS) OF 16-236 OF MUTANT ALA-138 IN COMPLEX WITH SUBSTRATE PEPTIDE</scope>
    <scope>SUBUNIT</scope>
    <source>
        <strain>ATCC 700860 / DSM 12428 / JCM 9974 / NBRC 100139 / OT-3</strain>
    </source>
</reference>
<reference key="6">
    <citation type="journal article" date="2013" name="J. Synchrotron Radiat.">
        <title>Structural and biochemical analysis of a thermostable membrane-bound stomatin-specific protease.</title>
        <authorList>
            <person name="Yokoyama H."/>
            <person name="Kobayashi D."/>
            <person name="Takizawa N."/>
            <person name="Fujii S."/>
            <person name="Matsui I."/>
        </authorList>
    </citation>
    <scope>X-RAY CRYSTALLOGRAPHY (2.40 ANGSTROMS) OF 16-236 OF MUTANT ALA-138</scope>
    <scope>FUNCTION</scope>
    <source>
        <strain>ATCC 700860 / DSM 12428 / JCM 9974 / NBRC 100139 / OT-3</strain>
    </source>
</reference>
<sequence length="441" mass="48281">MRRILLSMIVLIFLASPILAKNIVYVAQIKGQITSYTYDQFDRYITIAEQDNAEAIIIELDTPGGRADAMMNIVQRIQQSKIPVIIYVYPPGASAASAGTYIALGSHLIAMAPGTSIGACRPILGYSQNGSIIEAPPKITNYFIAYIKSLAQESGRNATIAEEFITKDLSLTPEEALKYGVIEVVARDINELLKKSNGMKTKIPVNGRYVTLNFTNVEVRYLAPSFKDKLISYITDPNVAYLLLTLGIWALIIGFLTPGWHVPETVGAIMIILAIIGFGYFGYNSAGILLIIVAMLFFIAEALTPTFGLFTVAGLITFIIGGILLFGGGEEYLVRKEVFSQLRILIITVGAILAAFFAFGMAAVIRAHKKKARTGKEEMIGLIGTVVEELNPEGMIKVRGELWKARSKFNGKIEKGEKVRVVDMDGLTLIVVRERKEGGEK</sequence>
<evidence type="ECO:0000255" key="1"/>
<evidence type="ECO:0000269" key="2">
    <source>
    </source>
</evidence>
<evidence type="ECO:0000269" key="3">
    <source>
    </source>
</evidence>
<evidence type="ECO:0000269" key="4">
    <source>
    </source>
</evidence>
<evidence type="ECO:0000269" key="5">
    <source>
    </source>
</evidence>
<evidence type="ECO:0000269" key="6">
    <source>
    </source>
</evidence>
<evidence type="ECO:0000305" key="7"/>
<evidence type="ECO:0007829" key="8">
    <source>
        <dbReference type="PDB" id="3VIV"/>
    </source>
</evidence>
<evidence type="ECO:0007829" key="9">
    <source>
        <dbReference type="PDB" id="3WWV"/>
    </source>
</evidence>
<evidence type="ECO:0007829" key="10">
    <source>
        <dbReference type="PDB" id="6M4B"/>
    </source>
</evidence>
<accession>O59179</accession>
<feature type="signal peptide" evidence="1">
    <location>
        <begin position="1"/>
        <end position="20"/>
    </location>
</feature>
<feature type="chain" id="PRO_0000429022" description="Membrane-bound protease PH1510">
    <location>
        <begin position="21"/>
        <end position="441"/>
    </location>
</feature>
<feature type="transmembrane region" description="Helical" evidence="1">
    <location>
        <begin position="239"/>
        <end position="259"/>
    </location>
</feature>
<feature type="transmembrane region" description="Helical" evidence="1">
    <location>
        <begin position="271"/>
        <end position="291"/>
    </location>
</feature>
<feature type="transmembrane region" description="Helical" evidence="1">
    <location>
        <begin position="307"/>
        <end position="327"/>
    </location>
</feature>
<feature type="transmembrane region" description="Helical" evidence="1">
    <location>
        <begin position="344"/>
        <end position="364"/>
    </location>
</feature>
<feature type="active site" description="Nucleophile">
    <location>
        <position position="97"/>
    </location>
</feature>
<feature type="active site" description="Proton donor/acceptor">
    <location>
        <position position="138"/>
    </location>
</feature>
<feature type="binding site">
    <location>
        <begin position="64"/>
        <end position="67"/>
    </location>
    <ligand>
        <name>substrate</name>
    </ligand>
</feature>
<feature type="binding site">
    <location>
        <begin position="119"/>
        <end position="124"/>
    </location>
    <ligand>
        <name>substrate</name>
    </ligand>
</feature>
<feature type="mutagenesis site" description="Reduces enzyme activity by over 90%." evidence="2">
    <original>T</original>
    <variation>A</variation>
    <location>
        <position position="62"/>
    </location>
</feature>
<feature type="mutagenesis site" description="Abolishes enzyme activity." evidence="2">
    <original>S</original>
    <variation>A</variation>
    <location>
        <position position="97"/>
    </location>
</feature>
<feature type="mutagenesis site" description="Reduces enzyme activity by 99%." evidence="2">
    <original>K</original>
    <variation>A</variation>
    <location>
        <position position="138"/>
    </location>
</feature>
<feature type="mutagenesis site" description="Reduces enzyme activity by 97%." evidence="2">
    <original>D</original>
    <variation>A</variation>
    <location>
        <position position="168"/>
    </location>
</feature>
<feature type="strand" evidence="8">
    <location>
        <begin position="23"/>
        <end position="31"/>
    </location>
</feature>
<feature type="helix" evidence="8">
    <location>
        <begin position="35"/>
        <end position="50"/>
    </location>
</feature>
<feature type="strand" evidence="8">
    <location>
        <begin position="54"/>
        <end position="63"/>
    </location>
</feature>
<feature type="helix" evidence="8">
    <location>
        <begin position="67"/>
        <end position="78"/>
    </location>
</feature>
<feature type="strand" evidence="8">
    <location>
        <begin position="84"/>
        <end position="88"/>
    </location>
</feature>
<feature type="strand" evidence="8">
    <location>
        <begin position="94"/>
        <end position="96"/>
    </location>
</feature>
<feature type="helix" evidence="8">
    <location>
        <begin position="98"/>
        <end position="104"/>
    </location>
</feature>
<feature type="strand" evidence="8">
    <location>
        <begin position="106"/>
        <end position="111"/>
    </location>
</feature>
<feature type="strand" evidence="8">
    <location>
        <begin position="116"/>
        <end position="118"/>
    </location>
</feature>
<feature type="strand" evidence="8">
    <location>
        <begin position="122"/>
        <end position="126"/>
    </location>
</feature>
<feature type="strand" evidence="10">
    <location>
        <begin position="128"/>
        <end position="130"/>
    </location>
</feature>
<feature type="strand" evidence="8">
    <location>
        <begin position="132"/>
        <end position="134"/>
    </location>
</feature>
<feature type="helix" evidence="8">
    <location>
        <begin position="137"/>
        <end position="153"/>
    </location>
</feature>
<feature type="helix" evidence="8">
    <location>
        <begin position="158"/>
        <end position="166"/>
    </location>
</feature>
<feature type="helix" evidence="8">
    <location>
        <begin position="173"/>
        <end position="178"/>
    </location>
</feature>
<feature type="strand" evidence="8">
    <location>
        <begin position="183"/>
        <end position="185"/>
    </location>
</feature>
<feature type="helix" evidence="8">
    <location>
        <begin position="189"/>
        <end position="196"/>
    </location>
</feature>
<feature type="strand" evidence="8">
    <location>
        <begin position="218"/>
        <end position="221"/>
    </location>
</feature>
<feature type="helix" evidence="8">
    <location>
        <begin position="226"/>
        <end position="236"/>
    </location>
</feature>
<feature type="helix" evidence="9">
    <location>
        <begin position="376"/>
        <end position="379"/>
    </location>
</feature>
<feature type="strand" evidence="9">
    <location>
        <begin position="383"/>
        <end position="388"/>
    </location>
</feature>
<feature type="strand" evidence="9">
    <location>
        <begin position="390"/>
        <end position="398"/>
    </location>
</feature>
<feature type="strand" evidence="9">
    <location>
        <begin position="401"/>
        <end position="409"/>
    </location>
</feature>
<feature type="strand" evidence="9">
    <location>
        <begin position="418"/>
        <end position="425"/>
    </location>
</feature>
<feature type="strand" evidence="9">
    <location>
        <begin position="428"/>
        <end position="433"/>
    </location>
</feature>
<proteinExistence type="evidence at protein level"/>
<keyword id="KW-0002">3D-structure</keyword>
<keyword id="KW-0378">Hydrolase</keyword>
<keyword id="KW-0472">Membrane</keyword>
<keyword id="KW-0645">Protease</keyword>
<keyword id="KW-0720">Serine protease</keyword>
<keyword id="KW-0732">Signal</keyword>
<keyword id="KW-0812">Transmembrane</keyword>
<keyword id="KW-1133">Transmembrane helix</keyword>
<comment type="function">
    <text evidence="2 3 6">Protease that cleaves its substrates preferentially near hydrophobic or aromatic amino acid residues. Can degrade casein and the stomatin homolog PH1511 (in vitro).</text>
</comment>
<comment type="activity regulation">
    <text evidence="2">Inhibited by divalent metal cations, including Mg(2+), Mn(2+), Ca(2+) and Zn(2+). Mildly inhibited by 0.01 % SDS and 0.1% dodecyl-beta-D-maltoside. Activity is nearly abolished by 1 % SDS.</text>
</comment>
<comment type="biophysicochemical properties">
    <phDependence>
        <text evidence="2">Optimum pH is 5-6.</text>
    </phDependence>
    <temperatureDependence>
        <text evidence="2">Optimum temperature is above 90 degrees Celsius.</text>
    </temperatureDependence>
</comment>
<comment type="subunit">
    <text evidence="2 3 4 5">Homodimer.</text>
</comment>
<comment type="subcellular location">
    <subcellularLocation>
        <location evidence="7">Membrane</location>
        <topology evidence="7">Multi-pass membrane protein</topology>
    </subcellularLocation>
</comment>
<comment type="similarity">
    <text evidence="7">Belongs to the peptidase S14 family.</text>
</comment>
<gene>
    <name type="ordered locus">PH1510</name>
</gene>
<protein>
    <recommendedName>
        <fullName>Membrane-bound protease PH1510</fullName>
        <ecNumber>3.4.21.-</ecNumber>
    </recommendedName>
    <alternativeName>
        <fullName>NfeD homolog</fullName>
    </alternativeName>
    <alternativeName>
        <fullName>Stomatin operon partner protein</fullName>
        <shortName>STOPP</shortName>
    </alternativeName>
</protein>
<name>STOPP_PYRHO</name>
<organism>
    <name type="scientific">Pyrococcus horikoshii (strain ATCC 700860 / DSM 12428 / JCM 9974 / NBRC 100139 / OT-3)</name>
    <dbReference type="NCBI Taxonomy" id="70601"/>
    <lineage>
        <taxon>Archaea</taxon>
        <taxon>Methanobacteriati</taxon>
        <taxon>Methanobacteriota</taxon>
        <taxon>Thermococci</taxon>
        <taxon>Thermococcales</taxon>
        <taxon>Thermococcaceae</taxon>
        <taxon>Pyrococcus</taxon>
    </lineage>
</organism>
<dbReference type="EC" id="3.4.21.-"/>
<dbReference type="EMBL" id="BA000001">
    <property type="protein sequence ID" value="BAA30618.1"/>
    <property type="molecule type" value="Genomic_DNA"/>
</dbReference>
<dbReference type="PIR" id="B71027">
    <property type="entry name" value="B71027"/>
</dbReference>
<dbReference type="RefSeq" id="WP_010885587.1">
    <property type="nucleotide sequence ID" value="NC_000961.1"/>
</dbReference>
<dbReference type="PDB" id="2DEO">
    <property type="method" value="X-ray"/>
    <property type="resolution" value="3.00 A"/>
    <property type="chains" value="A/B=16-236"/>
</dbReference>
<dbReference type="PDB" id="3BPP">
    <property type="method" value="X-ray"/>
    <property type="resolution" value="2.30 A"/>
    <property type="chains" value="A=16-236"/>
</dbReference>
<dbReference type="PDB" id="3VIV">
    <property type="method" value="X-ray"/>
    <property type="resolution" value="2.25 A"/>
    <property type="chains" value="A/B=16-236"/>
</dbReference>
<dbReference type="PDB" id="3WG5">
    <property type="method" value="X-ray"/>
    <property type="resolution" value="2.40 A"/>
    <property type="chains" value="A/B=16-236"/>
</dbReference>
<dbReference type="PDB" id="3WWV">
    <property type="method" value="X-ray"/>
    <property type="resolution" value="2.40 A"/>
    <property type="chains" value="A=371-441"/>
</dbReference>
<dbReference type="PDB" id="6M4B">
    <property type="method" value="X-ray"/>
    <property type="resolution" value="2.25 A"/>
    <property type="chains" value="A/B=16-236"/>
</dbReference>
<dbReference type="PDBsum" id="2DEO"/>
<dbReference type="PDBsum" id="3BPP"/>
<dbReference type="PDBsum" id="3VIV"/>
<dbReference type="PDBsum" id="3WG5"/>
<dbReference type="PDBsum" id="3WWV"/>
<dbReference type="PDBsum" id="6M4B"/>
<dbReference type="SMR" id="O59179"/>
<dbReference type="STRING" id="70601.gene:9378492"/>
<dbReference type="MEROPS" id="S49.005"/>
<dbReference type="TCDB" id="8.A.21.2.1">
    <property type="family name" value="the stomatin/podocin/band 7/nephrosis,2/spfh (stomatin) family"/>
</dbReference>
<dbReference type="EnsemblBacteria" id="BAA30618">
    <property type="protein sequence ID" value="BAA30618"/>
    <property type="gene ID" value="BAA30618"/>
</dbReference>
<dbReference type="GeneID" id="1443826"/>
<dbReference type="KEGG" id="pho:PH1510"/>
<dbReference type="eggNOG" id="arCOG01910">
    <property type="taxonomic scope" value="Archaea"/>
</dbReference>
<dbReference type="OrthoDB" id="28112at2157"/>
<dbReference type="BRENDA" id="3.4.21.B56">
    <property type="organism ID" value="5244"/>
</dbReference>
<dbReference type="EvolutionaryTrace" id="O59179"/>
<dbReference type="Proteomes" id="UP000000752">
    <property type="component" value="Chromosome"/>
</dbReference>
<dbReference type="GO" id="GO:0016020">
    <property type="term" value="C:membrane"/>
    <property type="evidence" value="ECO:0007669"/>
    <property type="project" value="UniProtKB-SubCell"/>
</dbReference>
<dbReference type="GO" id="GO:0008236">
    <property type="term" value="F:serine-type peptidase activity"/>
    <property type="evidence" value="ECO:0007669"/>
    <property type="project" value="UniProtKB-KW"/>
</dbReference>
<dbReference type="GO" id="GO:0006508">
    <property type="term" value="P:proteolysis"/>
    <property type="evidence" value="ECO:0007669"/>
    <property type="project" value="UniProtKB-KW"/>
</dbReference>
<dbReference type="CDD" id="cd07015">
    <property type="entry name" value="Clp_protease_NfeD"/>
    <property type="match status" value="1"/>
</dbReference>
<dbReference type="FunFam" id="2.40.50.140:FF:000336">
    <property type="entry name" value="Membrane-bound serine protease"/>
    <property type="match status" value="1"/>
</dbReference>
<dbReference type="FunFam" id="3.90.226.10:FF:000089">
    <property type="entry name" value="Membrane-bound serine protease"/>
    <property type="match status" value="1"/>
</dbReference>
<dbReference type="Gene3D" id="3.90.226.10">
    <property type="entry name" value="2-enoyl-CoA Hydratase, Chain A, domain 1"/>
    <property type="match status" value="1"/>
</dbReference>
<dbReference type="Gene3D" id="2.40.50.140">
    <property type="entry name" value="Nucleic acid-binding proteins"/>
    <property type="match status" value="1"/>
</dbReference>
<dbReference type="InterPro" id="IPR029045">
    <property type="entry name" value="ClpP/crotonase-like_dom_sf"/>
</dbReference>
<dbReference type="InterPro" id="IPR052165">
    <property type="entry name" value="Membrane_assoc_protease"/>
</dbReference>
<dbReference type="InterPro" id="IPR012340">
    <property type="entry name" value="NA-bd_OB-fold"/>
</dbReference>
<dbReference type="InterPro" id="IPR002810">
    <property type="entry name" value="NfeD-like_C"/>
</dbReference>
<dbReference type="InterPro" id="IPR056738">
    <property type="entry name" value="NfeD1b_N"/>
</dbReference>
<dbReference type="InterPro" id="IPR056739">
    <property type="entry name" value="NfeD_membrane"/>
</dbReference>
<dbReference type="InterPro" id="IPR033853">
    <property type="entry name" value="PH1510-N"/>
</dbReference>
<dbReference type="PANTHER" id="PTHR33507">
    <property type="entry name" value="INNER MEMBRANE PROTEIN YBBJ"/>
    <property type="match status" value="1"/>
</dbReference>
<dbReference type="PANTHER" id="PTHR33507:SF4">
    <property type="entry name" value="NODULATION COMPETITIVENESS PROTEIN NFED"/>
    <property type="match status" value="1"/>
</dbReference>
<dbReference type="Pfam" id="PF01957">
    <property type="entry name" value="NfeD"/>
    <property type="match status" value="1"/>
</dbReference>
<dbReference type="Pfam" id="PF25145">
    <property type="entry name" value="NfeD1b_N"/>
    <property type="match status" value="1"/>
</dbReference>
<dbReference type="Pfam" id="PF24961">
    <property type="entry name" value="NfeD_membrane"/>
    <property type="match status" value="1"/>
</dbReference>
<dbReference type="SUPFAM" id="SSF52096">
    <property type="entry name" value="ClpP/crotonase"/>
    <property type="match status" value="1"/>
</dbReference>
<dbReference type="SUPFAM" id="SSF141322">
    <property type="entry name" value="NfeD domain-like"/>
    <property type="match status" value="1"/>
</dbReference>